<protein>
    <recommendedName>
        <fullName evidence="1">Peptide chain release factor 1</fullName>
        <shortName evidence="1">RF-1</shortName>
    </recommendedName>
</protein>
<sequence>MIALPQDRMDQLLKRFSMIESQMANNPDSDTYVKLASEYSELQDVVGKIRELSDARMEASDLAAMRDDASTDAEMRALAVEELPEVEKRIAVLEQDVQILLLPKDAADDKNAILEIRAGTGGLEAALFAGDLFRMYERYAAEKGWRVELVSASEGDAGGYKEIIATVSGKGVFSKLKFESGVHRVQRVPETEAGGRIHTSAATVAVLPEAEDIDIEIRNEDIRIDTMRASGAGGQHVNTTDSAVRITHIPTGIMVVQAEKSQHQNRARAMQILRARLYDMERQKAESERSQARRSQVGSGDRSERIRTYNFPQGRVTDHRINLTLYKLDRVMEGDLDELVDALISDHQTALLAELGEQP</sequence>
<keyword id="KW-0963">Cytoplasm</keyword>
<keyword id="KW-0488">Methylation</keyword>
<keyword id="KW-0648">Protein biosynthesis</keyword>
<reference key="1">
    <citation type="journal article" date="2002" name="Proc. Natl. Acad. Sci. U.S.A.">
        <title>The Brucella suis genome reveals fundamental similarities between animal and plant pathogens and symbionts.</title>
        <authorList>
            <person name="Paulsen I.T."/>
            <person name="Seshadri R."/>
            <person name="Nelson K.E."/>
            <person name="Eisen J.A."/>
            <person name="Heidelberg J.F."/>
            <person name="Read T.D."/>
            <person name="Dodson R.J."/>
            <person name="Umayam L.A."/>
            <person name="Brinkac L.M."/>
            <person name="Beanan M.J."/>
            <person name="Daugherty S.C."/>
            <person name="DeBoy R.T."/>
            <person name="Durkin A.S."/>
            <person name="Kolonay J.F."/>
            <person name="Madupu R."/>
            <person name="Nelson W.C."/>
            <person name="Ayodeji B."/>
            <person name="Kraul M."/>
            <person name="Shetty J."/>
            <person name="Malek J.A."/>
            <person name="Van Aken S.E."/>
            <person name="Riedmuller S."/>
            <person name="Tettelin H."/>
            <person name="Gill S.R."/>
            <person name="White O."/>
            <person name="Salzberg S.L."/>
            <person name="Hoover D.L."/>
            <person name="Lindler L.E."/>
            <person name="Halling S.M."/>
            <person name="Boyle S.M."/>
            <person name="Fraser C.M."/>
        </authorList>
    </citation>
    <scope>NUCLEOTIDE SEQUENCE [LARGE SCALE GENOMIC DNA]</scope>
    <source>
        <strain>1330</strain>
    </source>
</reference>
<reference key="2">
    <citation type="journal article" date="2011" name="J. Bacteriol.">
        <title>Revised genome sequence of Brucella suis 1330.</title>
        <authorList>
            <person name="Tae H."/>
            <person name="Shallom S."/>
            <person name="Settlage R."/>
            <person name="Preston D."/>
            <person name="Adams L.G."/>
            <person name="Garner H.R."/>
        </authorList>
    </citation>
    <scope>NUCLEOTIDE SEQUENCE [LARGE SCALE GENOMIC DNA]</scope>
    <source>
        <strain>1330</strain>
    </source>
</reference>
<dbReference type="EMBL" id="AE014291">
    <property type="protein sequence ID" value="AAN30764.1"/>
    <property type="molecule type" value="Genomic_DNA"/>
</dbReference>
<dbReference type="EMBL" id="CP002997">
    <property type="protein sequence ID" value="AEM19181.1"/>
    <property type="molecule type" value="Genomic_DNA"/>
</dbReference>
<dbReference type="RefSeq" id="WP_004689263.1">
    <property type="nucleotide sequence ID" value="NZ_KN046804.1"/>
</dbReference>
<dbReference type="SMR" id="Q8FYK3"/>
<dbReference type="GeneID" id="55591464"/>
<dbReference type="KEGG" id="bms:BR1869"/>
<dbReference type="KEGG" id="bsi:BS1330_I1863"/>
<dbReference type="PATRIC" id="fig|204722.21.peg.3468"/>
<dbReference type="HOGENOM" id="CLU_036856_0_1_5"/>
<dbReference type="Proteomes" id="UP000007104">
    <property type="component" value="Chromosome I"/>
</dbReference>
<dbReference type="GO" id="GO:0005737">
    <property type="term" value="C:cytoplasm"/>
    <property type="evidence" value="ECO:0007669"/>
    <property type="project" value="UniProtKB-SubCell"/>
</dbReference>
<dbReference type="GO" id="GO:0016149">
    <property type="term" value="F:translation release factor activity, codon specific"/>
    <property type="evidence" value="ECO:0007669"/>
    <property type="project" value="UniProtKB-UniRule"/>
</dbReference>
<dbReference type="FunFam" id="3.30.160.20:FF:000004">
    <property type="entry name" value="Peptide chain release factor 1"/>
    <property type="match status" value="1"/>
</dbReference>
<dbReference type="FunFam" id="3.30.70.1660:FF:000002">
    <property type="entry name" value="Peptide chain release factor 1"/>
    <property type="match status" value="1"/>
</dbReference>
<dbReference type="FunFam" id="3.30.70.1660:FF:000004">
    <property type="entry name" value="Peptide chain release factor 1"/>
    <property type="match status" value="1"/>
</dbReference>
<dbReference type="Gene3D" id="3.30.160.20">
    <property type="match status" value="1"/>
</dbReference>
<dbReference type="Gene3D" id="3.30.70.1660">
    <property type="match status" value="2"/>
</dbReference>
<dbReference type="Gene3D" id="6.10.140.1950">
    <property type="match status" value="1"/>
</dbReference>
<dbReference type="HAMAP" id="MF_00093">
    <property type="entry name" value="Rel_fac_1"/>
    <property type="match status" value="1"/>
</dbReference>
<dbReference type="InterPro" id="IPR005139">
    <property type="entry name" value="PCRF"/>
</dbReference>
<dbReference type="InterPro" id="IPR000352">
    <property type="entry name" value="Pep_chain_release_fac_I"/>
</dbReference>
<dbReference type="InterPro" id="IPR045853">
    <property type="entry name" value="Pep_chain_release_fac_I_sf"/>
</dbReference>
<dbReference type="InterPro" id="IPR050057">
    <property type="entry name" value="Prokaryotic/Mito_RF"/>
</dbReference>
<dbReference type="InterPro" id="IPR004373">
    <property type="entry name" value="RF-1"/>
</dbReference>
<dbReference type="NCBIfam" id="TIGR00019">
    <property type="entry name" value="prfA"/>
    <property type="match status" value="1"/>
</dbReference>
<dbReference type="NCBIfam" id="NF001859">
    <property type="entry name" value="PRK00591.1"/>
    <property type="match status" value="1"/>
</dbReference>
<dbReference type="PANTHER" id="PTHR43804">
    <property type="entry name" value="LD18447P"/>
    <property type="match status" value="1"/>
</dbReference>
<dbReference type="PANTHER" id="PTHR43804:SF7">
    <property type="entry name" value="LD18447P"/>
    <property type="match status" value="1"/>
</dbReference>
<dbReference type="Pfam" id="PF03462">
    <property type="entry name" value="PCRF"/>
    <property type="match status" value="1"/>
</dbReference>
<dbReference type="Pfam" id="PF00472">
    <property type="entry name" value="RF-1"/>
    <property type="match status" value="1"/>
</dbReference>
<dbReference type="SMART" id="SM00937">
    <property type="entry name" value="PCRF"/>
    <property type="match status" value="1"/>
</dbReference>
<dbReference type="SUPFAM" id="SSF75620">
    <property type="entry name" value="Release factor"/>
    <property type="match status" value="1"/>
</dbReference>
<dbReference type="PROSITE" id="PS00745">
    <property type="entry name" value="RF_PROK_I"/>
    <property type="match status" value="1"/>
</dbReference>
<feature type="chain" id="PRO_0000177645" description="Peptide chain release factor 1">
    <location>
        <begin position="1"/>
        <end position="359"/>
    </location>
</feature>
<feature type="region of interest" description="Disordered" evidence="2">
    <location>
        <begin position="283"/>
        <end position="309"/>
    </location>
</feature>
<feature type="modified residue" description="N5-methylglutamine" evidence="1">
    <location>
        <position position="235"/>
    </location>
</feature>
<comment type="function">
    <text evidence="1">Peptide chain release factor 1 directs the termination of translation in response to the peptide chain termination codons UAG and UAA.</text>
</comment>
<comment type="subcellular location">
    <subcellularLocation>
        <location evidence="1">Cytoplasm</location>
    </subcellularLocation>
</comment>
<comment type="PTM">
    <text evidence="1">Methylated by PrmC. Methylation increases the termination efficiency of RF1.</text>
</comment>
<comment type="similarity">
    <text evidence="1">Belongs to the prokaryotic/mitochondrial release factor family.</text>
</comment>
<evidence type="ECO:0000255" key="1">
    <source>
        <dbReference type="HAMAP-Rule" id="MF_00093"/>
    </source>
</evidence>
<evidence type="ECO:0000256" key="2">
    <source>
        <dbReference type="SAM" id="MobiDB-lite"/>
    </source>
</evidence>
<name>RF1_BRUSU</name>
<accession>Q8FYK3</accession>
<accession>G0K7T5</accession>
<proteinExistence type="inferred from homology"/>
<organism>
    <name type="scientific">Brucella suis biovar 1 (strain 1330)</name>
    <dbReference type="NCBI Taxonomy" id="204722"/>
    <lineage>
        <taxon>Bacteria</taxon>
        <taxon>Pseudomonadati</taxon>
        <taxon>Pseudomonadota</taxon>
        <taxon>Alphaproteobacteria</taxon>
        <taxon>Hyphomicrobiales</taxon>
        <taxon>Brucellaceae</taxon>
        <taxon>Brucella/Ochrobactrum group</taxon>
        <taxon>Brucella</taxon>
    </lineage>
</organism>
<gene>
    <name evidence="1" type="primary">prfA</name>
    <name type="ordered locus">BR1869</name>
    <name type="ordered locus">BS1330_I1863</name>
</gene>